<evidence type="ECO:0000255" key="1"/>
<evidence type="ECO:0000269" key="2">
    <source>
    </source>
</evidence>
<evidence type="ECO:0000269" key="3">
    <source>
    </source>
</evidence>
<evidence type="ECO:0000305" key="4"/>
<evidence type="ECO:0007829" key="5">
    <source>
        <dbReference type="PDB" id="3K6Y"/>
    </source>
</evidence>
<evidence type="ECO:0007829" key="6">
    <source>
        <dbReference type="PDB" id="3K6Z"/>
    </source>
</evidence>
<proteinExistence type="evidence at protein level"/>
<protein>
    <recommendedName>
        <fullName>Serine protease Rv3671c</fullName>
        <ecNumber>3.4.21.-</ecNumber>
    </recommendedName>
</protein>
<name>Y3671_MYCTU</name>
<keyword id="KW-0002">3D-structure</keyword>
<keyword id="KW-0068">Autocatalytic cleavage</keyword>
<keyword id="KW-1015">Disulfide bond</keyword>
<keyword id="KW-0378">Hydrolase</keyword>
<keyword id="KW-0472">Membrane</keyword>
<keyword id="KW-0645">Protease</keyword>
<keyword id="KW-1185">Reference proteome</keyword>
<keyword id="KW-0812">Transmembrane</keyword>
<keyword id="KW-1133">Transmembrane helix</keyword>
<feature type="chain" id="PRO_0000414589" description="Serine protease Rv3671c">
    <location>
        <begin position="1"/>
        <end position="397"/>
    </location>
</feature>
<feature type="transmembrane region" description="Helical" evidence="1">
    <location>
        <begin position="9"/>
        <end position="29"/>
    </location>
</feature>
<feature type="transmembrane region" description="Helical" evidence="1">
    <location>
        <begin position="32"/>
        <end position="52"/>
    </location>
</feature>
<feature type="transmembrane region" description="Helical" evidence="1">
    <location>
        <begin position="62"/>
        <end position="82"/>
    </location>
</feature>
<feature type="transmembrane region" description="Helical" evidence="1">
    <location>
        <begin position="102"/>
        <end position="122"/>
    </location>
</feature>
<feature type="domain" description="Peptidase S1" evidence="4">
    <location>
        <begin position="193"/>
        <end position="384"/>
    </location>
</feature>
<feature type="active site" description="Proton acceptor" evidence="1">
    <location>
        <position position="235"/>
    </location>
</feature>
<feature type="active site" evidence="1">
    <location>
        <position position="264"/>
    </location>
</feature>
<feature type="active site" evidence="1">
    <location>
        <position position="343"/>
    </location>
</feature>
<feature type="site" description="Cleavage; by autolysis">
    <location>
        <begin position="160"/>
        <end position="161"/>
    </location>
</feature>
<feature type="disulfide bond">
    <location>
        <begin position="214"/>
        <end position="395"/>
    </location>
</feature>
<feature type="mutagenesis site" description="Significant decrease of protease activity." evidence="3">
    <original>C</original>
    <variation>A</variation>
    <location>
        <position position="214"/>
    </location>
</feature>
<feature type="mutagenesis site" description="Abolishes complementation of the Rv3671c mutant. It does not exhibit autocleavage activity." evidence="2 3">
    <original>S</original>
    <variation>A</variation>
    <location>
        <position position="343"/>
    </location>
</feature>
<feature type="mutagenesis site" description="Significant decrease of protease activity." evidence="3">
    <original>C</original>
    <variation>A</variation>
    <location>
        <position position="395"/>
    </location>
</feature>
<feature type="helix" evidence="5">
    <location>
        <begin position="189"/>
        <end position="193"/>
    </location>
</feature>
<feature type="helix" evidence="5">
    <location>
        <begin position="195"/>
        <end position="200"/>
    </location>
</feature>
<feature type="helix" evidence="5">
    <location>
        <begin position="201"/>
        <end position="203"/>
    </location>
</feature>
<feature type="strand" evidence="5">
    <location>
        <begin position="204"/>
        <end position="211"/>
    </location>
</feature>
<feature type="helix" evidence="5">
    <location>
        <begin position="212"/>
        <end position="214"/>
    </location>
</feature>
<feature type="strand" evidence="5">
    <location>
        <begin position="216"/>
        <end position="226"/>
    </location>
</feature>
<feature type="strand" evidence="5">
    <location>
        <begin position="229"/>
        <end position="232"/>
    </location>
</feature>
<feature type="helix" evidence="5">
    <location>
        <begin position="234"/>
        <end position="236"/>
    </location>
</feature>
<feature type="turn" evidence="5">
    <location>
        <begin position="237"/>
        <end position="239"/>
    </location>
</feature>
<feature type="strand" evidence="5">
    <location>
        <begin position="241"/>
        <end position="247"/>
    </location>
</feature>
<feature type="strand" evidence="5">
    <location>
        <begin position="250"/>
        <end position="253"/>
    </location>
</feature>
<feature type="strand" evidence="5">
    <location>
        <begin position="255"/>
        <end position="260"/>
    </location>
</feature>
<feature type="turn" evidence="5">
    <location>
        <begin position="261"/>
        <end position="264"/>
    </location>
</feature>
<feature type="strand" evidence="5">
    <location>
        <begin position="265"/>
        <end position="269"/>
    </location>
</feature>
<feature type="strand" evidence="5">
    <location>
        <begin position="290"/>
        <end position="295"/>
    </location>
</feature>
<feature type="helix" evidence="5">
    <location>
        <begin position="297"/>
        <end position="299"/>
    </location>
</feature>
<feature type="strand" evidence="5">
    <location>
        <begin position="303"/>
        <end position="317"/>
    </location>
</feature>
<feature type="strand" evidence="5">
    <location>
        <begin position="327"/>
        <end position="336"/>
    </location>
</feature>
<feature type="helix" evidence="6">
    <location>
        <begin position="340"/>
        <end position="342"/>
    </location>
</feature>
<feature type="strand" evidence="5">
    <location>
        <begin position="346"/>
        <end position="348"/>
    </location>
</feature>
<feature type="strand" evidence="5">
    <location>
        <begin position="354"/>
        <end position="361"/>
    </location>
</feature>
<feature type="strand" evidence="5">
    <location>
        <begin position="363"/>
        <end position="365"/>
    </location>
</feature>
<feature type="strand" evidence="5">
    <location>
        <begin position="368"/>
        <end position="373"/>
    </location>
</feature>
<feature type="helix" evidence="5">
    <location>
        <begin position="374"/>
        <end position="378"/>
    </location>
</feature>
<feature type="helix" evidence="5">
    <location>
        <begin position="379"/>
        <end position="383"/>
    </location>
</feature>
<reference key="1">
    <citation type="journal article" date="1998" name="Nature">
        <title>Deciphering the biology of Mycobacterium tuberculosis from the complete genome sequence.</title>
        <authorList>
            <person name="Cole S.T."/>
            <person name="Brosch R."/>
            <person name="Parkhill J."/>
            <person name="Garnier T."/>
            <person name="Churcher C.M."/>
            <person name="Harris D.E."/>
            <person name="Gordon S.V."/>
            <person name="Eiglmeier K."/>
            <person name="Gas S."/>
            <person name="Barry C.E. III"/>
            <person name="Tekaia F."/>
            <person name="Badcock K."/>
            <person name="Basham D."/>
            <person name="Brown D."/>
            <person name="Chillingworth T."/>
            <person name="Connor R."/>
            <person name="Davies R.M."/>
            <person name="Devlin K."/>
            <person name="Feltwell T."/>
            <person name="Gentles S."/>
            <person name="Hamlin N."/>
            <person name="Holroyd S."/>
            <person name="Hornsby T."/>
            <person name="Jagels K."/>
            <person name="Krogh A."/>
            <person name="McLean J."/>
            <person name="Moule S."/>
            <person name="Murphy L.D."/>
            <person name="Oliver S."/>
            <person name="Osborne J."/>
            <person name="Quail M.A."/>
            <person name="Rajandream M.A."/>
            <person name="Rogers J."/>
            <person name="Rutter S."/>
            <person name="Seeger K."/>
            <person name="Skelton S."/>
            <person name="Squares S."/>
            <person name="Squares R."/>
            <person name="Sulston J.E."/>
            <person name="Taylor K."/>
            <person name="Whitehead S."/>
            <person name="Barrell B.G."/>
        </authorList>
    </citation>
    <scope>NUCLEOTIDE SEQUENCE [LARGE SCALE GENOMIC DNA]</scope>
    <source>
        <strain>ATCC 25618 / H37Rv</strain>
    </source>
</reference>
<reference key="2">
    <citation type="journal article" date="2008" name="Nat. Med.">
        <title>A membrane protein preserves intrabacterial pH in intraphagosomal Mycobacterium tuberculosis.</title>
        <authorList>
            <person name="Vandal O.H."/>
            <person name="Pierini L.M."/>
            <person name="Schnappinger D."/>
            <person name="Nathan C.F."/>
            <person name="Ehrt S."/>
        </authorList>
    </citation>
    <scope>FUNCTION IN ACID RESISTANCE AND INTRABACTERIAL PH MAINTENANCE</scope>
    <scope>DISRUPTION PHENOTYPE</scope>
    <scope>MUTAGENESIS OF SER-343</scope>
</reference>
<reference key="3">
    <citation type="journal article" date="2011" name="Mol. Cell. Proteomics">
        <title>Proteogenomic analysis of Mycobacterium tuberculosis by high resolution mass spectrometry.</title>
        <authorList>
            <person name="Kelkar D.S."/>
            <person name="Kumar D."/>
            <person name="Kumar P."/>
            <person name="Balakrishnan L."/>
            <person name="Muthusamy B."/>
            <person name="Yadav A.K."/>
            <person name="Shrivastava P."/>
            <person name="Marimuthu A."/>
            <person name="Anand S."/>
            <person name="Sundaram H."/>
            <person name="Kingsbury R."/>
            <person name="Harsha H.C."/>
            <person name="Nair B."/>
            <person name="Prasad T.S."/>
            <person name="Chauhan D.S."/>
            <person name="Katoch K."/>
            <person name="Katoch V.M."/>
            <person name="Kumar P."/>
            <person name="Chaerkady R."/>
            <person name="Ramachandran S."/>
            <person name="Dash D."/>
            <person name="Pandey A."/>
        </authorList>
    </citation>
    <scope>IDENTIFICATION BY MASS SPECTROMETRY [LARGE SCALE ANALYSIS]</scope>
    <source>
        <strain>ATCC 25618 / H37Rv</strain>
    </source>
</reference>
<reference key="4">
    <citation type="journal article" date="2010" name="Structure">
        <title>Structural insight into serine protease Rv3671c that Protects M. tuberculosis from oxidative and acidic stress.</title>
        <authorList>
            <person name="Biswas T."/>
            <person name="Small J."/>
            <person name="Vandal O."/>
            <person name="Odaira T."/>
            <person name="Deng H."/>
            <person name="Ehrt S."/>
            <person name="Tsodikov O.V."/>
        </authorList>
    </citation>
    <scope>X-RAY CRYSTALLOGRAPHY (1.30 ANGSTROMS) OF 161-397 AND OF 161-397 OF MUTANT ALA-343</scope>
    <scope>FUNCTION AS A SERINE PROTEASE AND IN PROTECTION AGAINST OXIDATIVE STRESS</scope>
    <scope>AUTOCATALYTIC CLEAVAGE</scope>
    <scope>ACTIVITY REGULATION</scope>
    <scope>MUTAGENESIS OF CYS-214; SER-343 AND CYS-395</scope>
    <scope>SUBUNIT</scope>
</reference>
<accession>P9WHR9</accession>
<accession>L0TDG7</accession>
<accession>O69639</accession>
<accession>Q7D538</accession>
<gene>
    <name type="ordered locus">Rv3671c</name>
</gene>
<dbReference type="EC" id="3.4.21.-"/>
<dbReference type="EMBL" id="AL123456">
    <property type="protein sequence ID" value="CCP46494.1"/>
    <property type="molecule type" value="Genomic_DNA"/>
</dbReference>
<dbReference type="PIR" id="H70789">
    <property type="entry name" value="H70789"/>
</dbReference>
<dbReference type="RefSeq" id="NP_218188.1">
    <property type="nucleotide sequence ID" value="NC_000962.3"/>
</dbReference>
<dbReference type="PDB" id="3K6Y">
    <property type="method" value="X-ray"/>
    <property type="resolution" value="1.30 A"/>
    <property type="chains" value="A=161-397"/>
</dbReference>
<dbReference type="PDB" id="3K6Z">
    <property type="method" value="X-ray"/>
    <property type="resolution" value="1.75 A"/>
    <property type="chains" value="A/B=179-397"/>
</dbReference>
<dbReference type="PDB" id="3LT3">
    <property type="method" value="X-ray"/>
    <property type="resolution" value="2.10 A"/>
    <property type="chains" value="A/B=181-397"/>
</dbReference>
<dbReference type="PDBsum" id="3K6Y"/>
<dbReference type="PDBsum" id="3K6Z"/>
<dbReference type="PDBsum" id="3LT3"/>
<dbReference type="SMR" id="P9WHR9"/>
<dbReference type="STRING" id="83332.Rv3671c"/>
<dbReference type="MEROPS" id="S01.513"/>
<dbReference type="PaxDb" id="83332-Rv3671c"/>
<dbReference type="DNASU" id="885176"/>
<dbReference type="GeneID" id="885176"/>
<dbReference type="KEGG" id="mtu:Rv3671c"/>
<dbReference type="KEGG" id="mtv:RVBD_3671c"/>
<dbReference type="PATRIC" id="fig|83332.111.peg.4082"/>
<dbReference type="TubercuList" id="Rv3671c"/>
<dbReference type="eggNOG" id="COG0265">
    <property type="taxonomic scope" value="Bacteria"/>
</dbReference>
<dbReference type="InParanoid" id="P9WHR9"/>
<dbReference type="OrthoDB" id="9766361at2"/>
<dbReference type="PhylomeDB" id="P9WHR9"/>
<dbReference type="EvolutionaryTrace" id="P9WHR9"/>
<dbReference type="PRO" id="PR:P9WHR9"/>
<dbReference type="Proteomes" id="UP000001584">
    <property type="component" value="Chromosome"/>
</dbReference>
<dbReference type="GO" id="GO:0005576">
    <property type="term" value="C:extracellular region"/>
    <property type="evidence" value="ECO:0007005"/>
    <property type="project" value="MTBBASE"/>
</dbReference>
<dbReference type="GO" id="GO:0009274">
    <property type="term" value="C:peptidoglycan-based cell wall"/>
    <property type="evidence" value="ECO:0007005"/>
    <property type="project" value="MTBBASE"/>
</dbReference>
<dbReference type="GO" id="GO:0005886">
    <property type="term" value="C:plasma membrane"/>
    <property type="evidence" value="ECO:0000314"/>
    <property type="project" value="MTBBASE"/>
</dbReference>
<dbReference type="GO" id="GO:0004252">
    <property type="term" value="F:serine-type endopeptidase activity"/>
    <property type="evidence" value="ECO:0007669"/>
    <property type="project" value="InterPro"/>
</dbReference>
<dbReference type="GO" id="GO:0006508">
    <property type="term" value="P:proteolysis"/>
    <property type="evidence" value="ECO:0007669"/>
    <property type="project" value="UniProtKB-KW"/>
</dbReference>
<dbReference type="GO" id="GO:0010447">
    <property type="term" value="P:response to acidic pH"/>
    <property type="evidence" value="ECO:0000315"/>
    <property type="project" value="UniProtKB"/>
</dbReference>
<dbReference type="GO" id="GO:0042783">
    <property type="term" value="P:symbiont-mediated evasion of host immune response"/>
    <property type="evidence" value="ECO:0000315"/>
    <property type="project" value="MTBBASE"/>
</dbReference>
<dbReference type="GO" id="GO:0009403">
    <property type="term" value="P:toxin biosynthetic process"/>
    <property type="evidence" value="ECO:0007669"/>
    <property type="project" value="InterPro"/>
</dbReference>
<dbReference type="Gene3D" id="2.40.10.10">
    <property type="entry name" value="Trypsin-like serine proteases"/>
    <property type="match status" value="2"/>
</dbReference>
<dbReference type="InterPro" id="IPR003825">
    <property type="entry name" value="Colicin-V_CvpA"/>
</dbReference>
<dbReference type="InterPro" id="IPR047680">
    <property type="entry name" value="MarP-like"/>
</dbReference>
<dbReference type="InterPro" id="IPR009003">
    <property type="entry name" value="Peptidase_S1_PA"/>
</dbReference>
<dbReference type="InterPro" id="IPR043504">
    <property type="entry name" value="Peptidase_S1_PA_chymotrypsin"/>
</dbReference>
<dbReference type="InterPro" id="IPR001940">
    <property type="entry name" value="Peptidase_S1C"/>
</dbReference>
<dbReference type="NCBIfam" id="NF033740">
    <property type="entry name" value="MarP_fam_protase"/>
    <property type="match status" value="1"/>
</dbReference>
<dbReference type="PANTHER" id="PTHR43019:SF23">
    <property type="entry name" value="PROTEASE DO-LIKE 5, CHLOROPLASTIC"/>
    <property type="match status" value="1"/>
</dbReference>
<dbReference type="PANTHER" id="PTHR43019">
    <property type="entry name" value="SERINE ENDOPROTEASE DEGS"/>
    <property type="match status" value="1"/>
</dbReference>
<dbReference type="Pfam" id="PF02674">
    <property type="entry name" value="Colicin_V"/>
    <property type="match status" value="1"/>
</dbReference>
<dbReference type="Pfam" id="PF13365">
    <property type="entry name" value="Trypsin_2"/>
    <property type="match status" value="1"/>
</dbReference>
<dbReference type="PRINTS" id="PR00834">
    <property type="entry name" value="PROTEASES2C"/>
</dbReference>
<dbReference type="SUPFAM" id="SSF50494">
    <property type="entry name" value="Trypsin-like serine proteases"/>
    <property type="match status" value="1"/>
</dbReference>
<dbReference type="PROSITE" id="PS00135">
    <property type="entry name" value="TRYPSIN_SER"/>
    <property type="match status" value="1"/>
</dbReference>
<comment type="function">
    <text evidence="2 3">Required for M.tuberculosis resistance to oxidative stress in addition to its role in resistance to acid, which is essential for virulence. It protects M.tuberculosis against phagolysosomal concentrations of acid and maintains its intrabacterial pH when phagocytosed by IFN-gamma-activated macrophages.</text>
</comment>
<comment type="activity regulation">
    <text evidence="3">Inhibited by reducing agents and activated during exposure to oxidative stress.</text>
</comment>
<comment type="subunit">
    <text evidence="3">Monomer.</text>
</comment>
<comment type="subcellular location">
    <subcellularLocation>
        <location evidence="4">Membrane</location>
        <topology evidence="4">Multi-pass membrane protein</topology>
    </subcellularLocation>
</comment>
<comment type="PTM">
    <text>Autocleaved. The autocleavage activity is significant only when no reducing agent is present in buffers.</text>
</comment>
<comment type="disruption phenotype">
    <text evidence="2">Disruption leads to an increased sensitivity to acid and fails to maintain intrabacterial pH in acid in vitro and in activated macrophages. Growth is also severely attenuated in mice.</text>
</comment>
<comment type="miscellaneous">
    <text>Disulfide bond increases the proteolytic activity by stabilizing the protease in the conformation in which the active site residues are properly positioned for substrate binding and catalysis.</text>
</comment>
<comment type="similarity">
    <text evidence="4">Belongs to the peptidase S1C family.</text>
</comment>
<organism>
    <name type="scientific">Mycobacterium tuberculosis (strain ATCC 25618 / H37Rv)</name>
    <dbReference type="NCBI Taxonomy" id="83332"/>
    <lineage>
        <taxon>Bacteria</taxon>
        <taxon>Bacillati</taxon>
        <taxon>Actinomycetota</taxon>
        <taxon>Actinomycetes</taxon>
        <taxon>Mycobacteriales</taxon>
        <taxon>Mycobacteriaceae</taxon>
        <taxon>Mycobacterium</taxon>
        <taxon>Mycobacterium tuberculosis complex</taxon>
    </lineage>
</organism>
<sequence length="397" mass="40721">MTPSQWLDIAVLAVAFIAAISGWRAGALGSMLSFGGVLLGATAGVLLAPHIVSQISAPRAKLFAALFLILALVVVGEVAGVVLGRAVRGAIRNRPIRLIDSVIGVGVQLVVVLTAAWLLAMPLTQSKEQPELAAAVKGSRVLARVNEAAPTWLKTVPKRLSALLNTSGLPAVLEPFSRTPVIPVASPDPALVNNPVVAATEPSVVKIRSLAPRCQKVLEGTGFVISPDRVMTNAHVVAGSNNVTVYAGDKPFEATVVSYDPSVDVAILAVPHLPPPPLVFAAEPAKTGADVVVLGYPGGGNFTATPARIREAIRLSGPDIYGDPEPVTRDVYTIRADVEQGDSGGPLIDLNGQVLGVVFGAAIDDAETGFVLTAGEVAGQLAKIGATQPVGTGACVS</sequence>